<dbReference type="EC" id="2.5.1.75" evidence="1"/>
<dbReference type="EMBL" id="AE016826">
    <property type="protein sequence ID" value="AAO27217.1"/>
    <property type="molecule type" value="Genomic_DNA"/>
</dbReference>
<dbReference type="RefSeq" id="WP_011091618.1">
    <property type="nucleotide sequence ID" value="NC_004545.1"/>
</dbReference>
<dbReference type="SMR" id="P59507"/>
<dbReference type="STRING" id="224915.bbp_514"/>
<dbReference type="KEGG" id="bab:bbp_514"/>
<dbReference type="eggNOG" id="COG0324">
    <property type="taxonomic scope" value="Bacteria"/>
</dbReference>
<dbReference type="HOGENOM" id="CLU_032616_0_0_6"/>
<dbReference type="OrthoDB" id="9776390at2"/>
<dbReference type="Proteomes" id="UP000000601">
    <property type="component" value="Chromosome"/>
</dbReference>
<dbReference type="GO" id="GO:0005524">
    <property type="term" value="F:ATP binding"/>
    <property type="evidence" value="ECO:0007669"/>
    <property type="project" value="UniProtKB-UniRule"/>
</dbReference>
<dbReference type="GO" id="GO:0052381">
    <property type="term" value="F:tRNA dimethylallyltransferase activity"/>
    <property type="evidence" value="ECO:0007669"/>
    <property type="project" value="UniProtKB-UniRule"/>
</dbReference>
<dbReference type="GO" id="GO:0006400">
    <property type="term" value="P:tRNA modification"/>
    <property type="evidence" value="ECO:0007669"/>
    <property type="project" value="TreeGrafter"/>
</dbReference>
<dbReference type="FunFam" id="1.10.20.140:FF:000001">
    <property type="entry name" value="tRNA dimethylallyltransferase"/>
    <property type="match status" value="1"/>
</dbReference>
<dbReference type="Gene3D" id="1.10.20.140">
    <property type="match status" value="1"/>
</dbReference>
<dbReference type="Gene3D" id="3.40.50.300">
    <property type="entry name" value="P-loop containing nucleotide triphosphate hydrolases"/>
    <property type="match status" value="1"/>
</dbReference>
<dbReference type="HAMAP" id="MF_00185">
    <property type="entry name" value="IPP_trans"/>
    <property type="match status" value="1"/>
</dbReference>
<dbReference type="InterPro" id="IPR039657">
    <property type="entry name" value="Dimethylallyltransferase"/>
</dbReference>
<dbReference type="InterPro" id="IPR018022">
    <property type="entry name" value="IPT"/>
</dbReference>
<dbReference type="InterPro" id="IPR027417">
    <property type="entry name" value="P-loop_NTPase"/>
</dbReference>
<dbReference type="NCBIfam" id="TIGR00174">
    <property type="entry name" value="miaA"/>
    <property type="match status" value="1"/>
</dbReference>
<dbReference type="PANTHER" id="PTHR11088">
    <property type="entry name" value="TRNA DIMETHYLALLYLTRANSFERASE"/>
    <property type="match status" value="1"/>
</dbReference>
<dbReference type="PANTHER" id="PTHR11088:SF60">
    <property type="entry name" value="TRNA DIMETHYLALLYLTRANSFERASE"/>
    <property type="match status" value="1"/>
</dbReference>
<dbReference type="Pfam" id="PF01715">
    <property type="entry name" value="IPPT"/>
    <property type="match status" value="1"/>
</dbReference>
<dbReference type="SUPFAM" id="SSF52540">
    <property type="entry name" value="P-loop containing nucleoside triphosphate hydrolases"/>
    <property type="match status" value="1"/>
</dbReference>
<gene>
    <name evidence="1" type="primary">miaA</name>
    <name type="ordered locus">bbp_514</name>
</gene>
<organism>
    <name type="scientific">Buchnera aphidicola subsp. Baizongia pistaciae (strain Bp)</name>
    <dbReference type="NCBI Taxonomy" id="224915"/>
    <lineage>
        <taxon>Bacteria</taxon>
        <taxon>Pseudomonadati</taxon>
        <taxon>Pseudomonadota</taxon>
        <taxon>Gammaproteobacteria</taxon>
        <taxon>Enterobacterales</taxon>
        <taxon>Erwiniaceae</taxon>
        <taxon>Buchnera</taxon>
    </lineage>
</organism>
<feature type="chain" id="PRO_0000163891" description="tRNA dimethylallyltransferase">
    <location>
        <begin position="1"/>
        <end position="323"/>
    </location>
</feature>
<feature type="region of interest" description="Interaction with substrate tRNA" evidence="1">
    <location>
        <begin position="46"/>
        <end position="49"/>
    </location>
</feature>
<feature type="region of interest" description="Interaction with substrate tRNA" evidence="1">
    <location>
        <begin position="171"/>
        <end position="175"/>
    </location>
</feature>
<feature type="region of interest" description="Interaction with substrate tRNA" evidence="1">
    <location>
        <begin position="252"/>
        <end position="257"/>
    </location>
</feature>
<feature type="binding site" evidence="1">
    <location>
        <begin position="21"/>
        <end position="28"/>
    </location>
    <ligand>
        <name>ATP</name>
        <dbReference type="ChEBI" id="CHEBI:30616"/>
    </ligand>
</feature>
<feature type="binding site" evidence="1">
    <location>
        <begin position="23"/>
        <end position="28"/>
    </location>
    <ligand>
        <name>substrate</name>
    </ligand>
</feature>
<feature type="site" description="Interaction with substrate tRNA" evidence="1">
    <location>
        <position position="112"/>
    </location>
</feature>
<feature type="site" description="Interaction with substrate tRNA" evidence="1">
    <location>
        <position position="135"/>
    </location>
</feature>
<sequence length="323" mass="37554">MIVKFEKFEKLKKPLVIFLMGPTACNKSLLAMTLKDILPIELVSVDSALIYRGMDIGTAKPSNMELLKYPHFLVNIRDPLQTYSVGEFYKDILKIIDYIHSINKVPLLVGGTMFYFKILLTGGLSNLPSSNDNIRKYLLTLLQKKSKFFLFNQLKSIDPISAERIHFNDVQRVLRALEVFFISGKTLTELCRLKNFVSPYNIVQFSLMPESKEWLFNKITIRFKKMLSCGFEYEVKKLFNRGDLHKNLPSIRCVGYRQMWDYFMHNLTYDDMICESLKATKRLVKSQLTWLNNWKKLNVLSSSDTLKNLITKIISVINANIFV</sequence>
<evidence type="ECO:0000255" key="1">
    <source>
        <dbReference type="HAMAP-Rule" id="MF_00185"/>
    </source>
</evidence>
<accession>P59507</accession>
<proteinExistence type="inferred from homology"/>
<comment type="function">
    <text evidence="1">Catalyzes the transfer of a dimethylallyl group onto the adenine at position 37 in tRNAs that read codons beginning with uridine, leading to the formation of N6-(dimethylallyl)adenosine (i(6)A).</text>
</comment>
<comment type="catalytic activity">
    <reaction evidence="1">
        <text>adenosine(37) in tRNA + dimethylallyl diphosphate = N(6)-dimethylallyladenosine(37) in tRNA + diphosphate</text>
        <dbReference type="Rhea" id="RHEA:26482"/>
        <dbReference type="Rhea" id="RHEA-COMP:10162"/>
        <dbReference type="Rhea" id="RHEA-COMP:10375"/>
        <dbReference type="ChEBI" id="CHEBI:33019"/>
        <dbReference type="ChEBI" id="CHEBI:57623"/>
        <dbReference type="ChEBI" id="CHEBI:74411"/>
        <dbReference type="ChEBI" id="CHEBI:74415"/>
        <dbReference type="EC" id="2.5.1.75"/>
    </reaction>
</comment>
<comment type="cofactor">
    <cofactor evidence="1">
        <name>Mg(2+)</name>
        <dbReference type="ChEBI" id="CHEBI:18420"/>
    </cofactor>
</comment>
<comment type="subunit">
    <text evidence="1">Monomer.</text>
</comment>
<comment type="similarity">
    <text evidence="1">Belongs to the IPP transferase family.</text>
</comment>
<name>MIAA_BUCBP</name>
<protein>
    <recommendedName>
        <fullName evidence="1">tRNA dimethylallyltransferase</fullName>
        <ecNumber evidence="1">2.5.1.75</ecNumber>
    </recommendedName>
    <alternativeName>
        <fullName evidence="1">Dimethylallyl diphosphate:tRNA dimethylallyltransferase</fullName>
        <shortName evidence="1">DMAPP:tRNA dimethylallyltransferase</shortName>
        <shortName evidence="1">DMATase</shortName>
    </alternativeName>
    <alternativeName>
        <fullName evidence="1">Isopentenyl-diphosphate:tRNA isopentenyltransferase</fullName>
        <shortName evidence="1">IPP transferase</shortName>
        <shortName evidence="1">IPPT</shortName>
        <shortName evidence="1">IPTase</shortName>
    </alternativeName>
</protein>
<reference key="1">
    <citation type="journal article" date="2003" name="Proc. Natl. Acad. Sci. U.S.A.">
        <title>Reductive genome evolution in Buchnera aphidicola.</title>
        <authorList>
            <person name="van Ham R.C.H.J."/>
            <person name="Kamerbeek J."/>
            <person name="Palacios C."/>
            <person name="Rausell C."/>
            <person name="Abascal F."/>
            <person name="Bastolla U."/>
            <person name="Fernandez J.M."/>
            <person name="Jimenez L."/>
            <person name="Postigo M."/>
            <person name="Silva F.J."/>
            <person name="Tamames J."/>
            <person name="Viguera E."/>
            <person name="Latorre A."/>
            <person name="Valencia A."/>
            <person name="Moran F."/>
            <person name="Moya A."/>
        </authorList>
    </citation>
    <scope>NUCLEOTIDE SEQUENCE [LARGE SCALE GENOMIC DNA]</scope>
    <source>
        <strain>Bp</strain>
    </source>
</reference>
<keyword id="KW-0067">ATP-binding</keyword>
<keyword id="KW-0460">Magnesium</keyword>
<keyword id="KW-0547">Nucleotide-binding</keyword>
<keyword id="KW-1185">Reference proteome</keyword>
<keyword id="KW-0808">Transferase</keyword>
<keyword id="KW-0819">tRNA processing</keyword>